<keyword id="KW-0090">Biological rhythms</keyword>
<keyword id="KW-1185">Reference proteome</keyword>
<proteinExistence type="inferred from homology"/>
<dbReference type="EMBL" id="CP001037">
    <property type="protein sequence ID" value="ACC81420.1"/>
    <property type="molecule type" value="Genomic_DNA"/>
</dbReference>
<dbReference type="RefSeq" id="WP_012409411.1">
    <property type="nucleotide sequence ID" value="NC_010628.1"/>
</dbReference>
<dbReference type="SMR" id="B2IWG6"/>
<dbReference type="STRING" id="63737.Npun_R2887"/>
<dbReference type="EnsemblBacteria" id="ACC81420">
    <property type="protein sequence ID" value="ACC81420"/>
    <property type="gene ID" value="Npun_R2887"/>
</dbReference>
<dbReference type="KEGG" id="npu:Npun_R2887"/>
<dbReference type="eggNOG" id="COG4251">
    <property type="taxonomic scope" value="Bacteria"/>
</dbReference>
<dbReference type="HOGENOM" id="CLU_144073_0_0_3"/>
<dbReference type="OrthoDB" id="5458519at2"/>
<dbReference type="PhylomeDB" id="B2IWG6"/>
<dbReference type="Proteomes" id="UP000001191">
    <property type="component" value="Chromosome"/>
</dbReference>
<dbReference type="GO" id="GO:0007623">
    <property type="term" value="P:circadian rhythm"/>
    <property type="evidence" value="ECO:0007669"/>
    <property type="project" value="UniProtKB-UniRule"/>
</dbReference>
<dbReference type="CDD" id="cd02978">
    <property type="entry name" value="KaiB_like"/>
    <property type="match status" value="1"/>
</dbReference>
<dbReference type="FunFam" id="3.40.30.10:FF:000180">
    <property type="entry name" value="Circadian clock protein KaiB"/>
    <property type="match status" value="1"/>
</dbReference>
<dbReference type="Gene3D" id="3.40.30.10">
    <property type="entry name" value="Glutaredoxin"/>
    <property type="match status" value="1"/>
</dbReference>
<dbReference type="HAMAP" id="MF_01835">
    <property type="entry name" value="KaiB"/>
    <property type="match status" value="1"/>
</dbReference>
<dbReference type="InterPro" id="IPR013474">
    <property type="entry name" value="Circ_KaiB"/>
</dbReference>
<dbReference type="InterPro" id="IPR039022">
    <property type="entry name" value="KaiB-like"/>
</dbReference>
<dbReference type="InterPro" id="IPR011649">
    <property type="entry name" value="KaiB_domain"/>
</dbReference>
<dbReference type="InterPro" id="IPR036249">
    <property type="entry name" value="Thioredoxin-like_sf"/>
</dbReference>
<dbReference type="NCBIfam" id="TIGR02654">
    <property type="entry name" value="circ_KaiB"/>
    <property type="match status" value="1"/>
</dbReference>
<dbReference type="NCBIfam" id="NF006798">
    <property type="entry name" value="PRK09301.1"/>
    <property type="match status" value="1"/>
</dbReference>
<dbReference type="PANTHER" id="PTHR41709:SF2">
    <property type="entry name" value="CIRCADIAN CLOCK PROTEIN KAIB2"/>
    <property type="match status" value="1"/>
</dbReference>
<dbReference type="PANTHER" id="PTHR41709">
    <property type="entry name" value="KAIB-LIKE PROTEIN 1"/>
    <property type="match status" value="1"/>
</dbReference>
<dbReference type="Pfam" id="PF07689">
    <property type="entry name" value="KaiB"/>
    <property type="match status" value="1"/>
</dbReference>
<dbReference type="SMART" id="SM01248">
    <property type="entry name" value="KaiB"/>
    <property type="match status" value="1"/>
</dbReference>
<dbReference type="SUPFAM" id="SSF52833">
    <property type="entry name" value="Thioredoxin-like"/>
    <property type="match status" value="1"/>
</dbReference>
<name>KAIB_NOSP7</name>
<reference key="1">
    <citation type="journal article" date="2013" name="Plant Physiol.">
        <title>A Nostoc punctiforme Sugar Transporter Necessary to Establish a Cyanobacterium-Plant Symbiosis.</title>
        <authorList>
            <person name="Ekman M."/>
            <person name="Picossi S."/>
            <person name="Campbell E.L."/>
            <person name="Meeks J.C."/>
            <person name="Flores E."/>
        </authorList>
    </citation>
    <scope>NUCLEOTIDE SEQUENCE [LARGE SCALE GENOMIC DNA]</scope>
    <source>
        <strain>ATCC 29133 / PCC 73102</strain>
    </source>
</reference>
<organism>
    <name type="scientific">Nostoc punctiforme (strain ATCC 29133 / PCC 73102)</name>
    <dbReference type="NCBI Taxonomy" id="63737"/>
    <lineage>
        <taxon>Bacteria</taxon>
        <taxon>Bacillati</taxon>
        <taxon>Cyanobacteriota</taxon>
        <taxon>Cyanophyceae</taxon>
        <taxon>Nostocales</taxon>
        <taxon>Nostocaceae</taxon>
        <taxon>Nostoc</taxon>
    </lineage>
</organism>
<gene>
    <name evidence="1" type="primary">kaiB</name>
    <name type="ordered locus">Npun_R2887</name>
</gene>
<accession>B2IWG6</accession>
<sequence length="104" mass="11698">MIKAKKTYVLKLYVAGNTPNSVRALKTLKNILEQEFEGVYALKVIDVLKSPQLAEEDKILATPTLSKILPPPVRKIIGDLSDRERVLIGLDLLYEELSEGDFEE</sequence>
<comment type="function">
    <text evidence="1">Key component of the KaiABC oscillator complex, which constitutes the main circadian regulator in cyanobacteria. Complex composition changes during the circadian cycle to control KaiC phosphorylation. KaiA stimulates KaiC autophosphorylation, while KaiB sequesters KaiA, leading to KaiC autodephosphorylation. Phospho-Ser-431 KaiC accumulation triggers binding of KaiB to form the KaiB(6):KaiC(6) complex, leading to changes in output regulators CikA and SasA. KaiB switches to a thioredoxin-like fold (KaiB(fs)) when bound to KaiC. KaiB(6):KaiC(6) formation exposes a site for KaiA binding that sequesters KaiA from KaiC, making the KaiC(6):KaiB(6):KaiA(12) complex that results in KaiC autodephosphorylation.</text>
</comment>
<comment type="function">
    <text evidence="1">A metamorphic protein which reversibly switches between an inactive tetrameric fold and a rare, thioredoxin-like monomeric fold (KaiB(fs)). KaiB(fs) binds phospho-KaiC, KaiA and CikA. KaiA and CikA compete for binding to KaiB(fs), and KaiB(fs) and SasA compete for binding to KaiC, thus the clock oscillator and output signal pathway are tightly coupled.</text>
</comment>
<comment type="subunit">
    <text evidence="1">The KaiABC complex composition changes during the circadian cycle to control KaiC phosphorylation. Complexes KaiC(6), KaiA(2-4):KaiC(6), KaiB(6):KaiC(6) and KaiC(6):KaiB(6):KaiA(12) are among the most important forms, many form cooperatively. Undergoes a major conformational rearrangment; in the free state forms homotetramers as a dimer of dimers. When bound to the CI domain of KaiC switches to a monomeric thioredoxin-fold (KaiB(fs)). KaiB(fs) binds CikA, leading it to dephosphorylate phospho-RpaA.</text>
</comment>
<comment type="domain">
    <text evidence="1">Has 2 forms, fold switches to a thioredoxin-like fold (KaiB(fs)) when bound to KaiC.</text>
</comment>
<comment type="similarity">
    <text evidence="1">Belongs to the KaiB family.</text>
</comment>
<protein>
    <recommendedName>
        <fullName evidence="1">Circadian clock oscillator protein KaiB</fullName>
    </recommendedName>
</protein>
<feature type="chain" id="PRO_1000188347" description="Circadian clock oscillator protein KaiB">
    <location>
        <begin position="1"/>
        <end position="104"/>
    </location>
</feature>
<evidence type="ECO:0000255" key="1">
    <source>
        <dbReference type="HAMAP-Rule" id="MF_01835"/>
    </source>
</evidence>